<comment type="function">
    <text evidence="1">Catalyzes the transfer of the cytidylyl group of CTP to D-ribitol 5-phosphate.</text>
</comment>
<comment type="catalytic activity">
    <reaction evidence="1">
        <text>D-ribitol 5-phosphate + CTP + H(+) = CDP-L-ribitol + diphosphate</text>
        <dbReference type="Rhea" id="RHEA:12456"/>
        <dbReference type="ChEBI" id="CHEBI:15378"/>
        <dbReference type="ChEBI" id="CHEBI:33019"/>
        <dbReference type="ChEBI" id="CHEBI:37563"/>
        <dbReference type="ChEBI" id="CHEBI:57608"/>
        <dbReference type="ChEBI" id="CHEBI:57695"/>
        <dbReference type="EC" id="2.7.7.40"/>
    </reaction>
</comment>
<comment type="pathway">
    <text evidence="1">Cell wall biogenesis; poly(ribitol phosphate) teichoic acid biosynthesis.</text>
</comment>
<comment type="similarity">
    <text evidence="1">Belongs to the IspD/TarI cytidylyltransferase family. TarI subfamily.</text>
</comment>
<feature type="chain" id="PRO_1000119029" description="Ribitol-5-phosphate cytidylyltransferase">
    <location>
        <begin position="1"/>
        <end position="234"/>
    </location>
</feature>
<feature type="binding site" evidence="1">
    <location>
        <begin position="7"/>
        <end position="10"/>
    </location>
    <ligand>
        <name>CTP</name>
        <dbReference type="ChEBI" id="CHEBI:37563"/>
    </ligand>
</feature>
<feature type="binding site" evidence="1">
    <location>
        <begin position="79"/>
        <end position="85"/>
    </location>
    <ligand>
        <name>CTP</name>
        <dbReference type="ChEBI" id="CHEBI:37563"/>
    </ligand>
</feature>
<feature type="site" description="Transition state stabilizer" evidence="1">
    <location>
        <position position="14"/>
    </location>
</feature>
<feature type="site" description="Transition state stabilizer" evidence="1">
    <location>
        <position position="21"/>
    </location>
</feature>
<feature type="site" description="Positions ribitol 5-phosphate for the nucleophilic attack" evidence="1">
    <location>
        <position position="156"/>
    </location>
</feature>
<feature type="site" description="Positions ribitol 5-phosphate for the nucleophilic attack" evidence="1">
    <location>
        <position position="215"/>
    </location>
</feature>
<name>TARI_LACP3</name>
<dbReference type="EC" id="2.7.7.40" evidence="1"/>
<dbReference type="EMBL" id="CP000423">
    <property type="protein sequence ID" value="ABJ69889.1"/>
    <property type="molecule type" value="Genomic_DNA"/>
</dbReference>
<dbReference type="RefSeq" id="WP_011674392.1">
    <property type="nucleotide sequence ID" value="NC_008526.1"/>
</dbReference>
<dbReference type="RefSeq" id="YP_806331.1">
    <property type="nucleotide sequence ID" value="NC_008526.1"/>
</dbReference>
<dbReference type="SMR" id="Q03A83"/>
<dbReference type="STRING" id="321967.LSEI_1098"/>
<dbReference type="PaxDb" id="321967-LSEI_1098"/>
<dbReference type="KEGG" id="lca:LSEI_1098"/>
<dbReference type="PATRIC" id="fig|321967.11.peg.1070"/>
<dbReference type="HOGENOM" id="CLU_061281_2_3_9"/>
<dbReference type="UniPathway" id="UPA00790"/>
<dbReference type="Proteomes" id="UP000001651">
    <property type="component" value="Chromosome"/>
</dbReference>
<dbReference type="GO" id="GO:0005829">
    <property type="term" value="C:cytosol"/>
    <property type="evidence" value="ECO:0007669"/>
    <property type="project" value="TreeGrafter"/>
</dbReference>
<dbReference type="GO" id="GO:0047349">
    <property type="term" value="F:D-ribitol-5-phosphate cytidylyltransferase activity"/>
    <property type="evidence" value="ECO:0007669"/>
    <property type="project" value="UniProtKB-UniRule"/>
</dbReference>
<dbReference type="GO" id="GO:0071555">
    <property type="term" value="P:cell wall organization"/>
    <property type="evidence" value="ECO:0007669"/>
    <property type="project" value="UniProtKB-KW"/>
</dbReference>
<dbReference type="GO" id="GO:1902012">
    <property type="term" value="P:poly(ribitol phosphate) teichoic acid biosynthetic process"/>
    <property type="evidence" value="ECO:0007669"/>
    <property type="project" value="UniProtKB-UniRule"/>
</dbReference>
<dbReference type="CDD" id="cd02516">
    <property type="entry name" value="CDP-ME_synthetase"/>
    <property type="match status" value="1"/>
</dbReference>
<dbReference type="FunFam" id="3.90.550.10:FF:000003">
    <property type="entry name" value="2-C-methyl-D-erythritol 4-phosphate cytidylyltransferase"/>
    <property type="match status" value="1"/>
</dbReference>
<dbReference type="Gene3D" id="3.90.550.10">
    <property type="entry name" value="Spore Coat Polysaccharide Biosynthesis Protein SpsA, Chain A"/>
    <property type="match status" value="1"/>
</dbReference>
<dbReference type="HAMAP" id="MF_02068">
    <property type="entry name" value="TarI"/>
    <property type="match status" value="1"/>
</dbReference>
<dbReference type="InterPro" id="IPR034683">
    <property type="entry name" value="IspD/TarI"/>
</dbReference>
<dbReference type="InterPro" id="IPR029044">
    <property type="entry name" value="Nucleotide-diphossugar_trans"/>
</dbReference>
<dbReference type="InterPro" id="IPR034709">
    <property type="entry name" value="TarI"/>
</dbReference>
<dbReference type="PANTHER" id="PTHR43015">
    <property type="entry name" value="D-RIBITOL-5-PHOSPHATE CYTIDYLYLTRANSFERASE"/>
    <property type="match status" value="1"/>
</dbReference>
<dbReference type="PANTHER" id="PTHR43015:SF1">
    <property type="entry name" value="D-RIBITOL-5-PHOSPHATE CYTIDYLYLTRANSFERASE"/>
    <property type="match status" value="1"/>
</dbReference>
<dbReference type="Pfam" id="PF01128">
    <property type="entry name" value="IspD"/>
    <property type="match status" value="1"/>
</dbReference>
<dbReference type="SUPFAM" id="SSF53448">
    <property type="entry name" value="Nucleotide-diphospho-sugar transferases"/>
    <property type="match status" value="1"/>
</dbReference>
<reference key="1">
    <citation type="journal article" date="2006" name="Proc. Natl. Acad. Sci. U.S.A.">
        <title>Comparative genomics of the lactic acid bacteria.</title>
        <authorList>
            <person name="Makarova K.S."/>
            <person name="Slesarev A."/>
            <person name="Wolf Y.I."/>
            <person name="Sorokin A."/>
            <person name="Mirkin B."/>
            <person name="Koonin E.V."/>
            <person name="Pavlov A."/>
            <person name="Pavlova N."/>
            <person name="Karamychev V."/>
            <person name="Polouchine N."/>
            <person name="Shakhova V."/>
            <person name="Grigoriev I."/>
            <person name="Lou Y."/>
            <person name="Rohksar D."/>
            <person name="Lucas S."/>
            <person name="Huang K."/>
            <person name="Goodstein D.M."/>
            <person name="Hawkins T."/>
            <person name="Plengvidhya V."/>
            <person name="Welker D."/>
            <person name="Hughes J."/>
            <person name="Goh Y."/>
            <person name="Benson A."/>
            <person name="Baldwin K."/>
            <person name="Lee J.-H."/>
            <person name="Diaz-Muniz I."/>
            <person name="Dosti B."/>
            <person name="Smeianov V."/>
            <person name="Wechter W."/>
            <person name="Barabote R."/>
            <person name="Lorca G."/>
            <person name="Altermann E."/>
            <person name="Barrangou R."/>
            <person name="Ganesan B."/>
            <person name="Xie Y."/>
            <person name="Rawsthorne H."/>
            <person name="Tamir D."/>
            <person name="Parker C."/>
            <person name="Breidt F."/>
            <person name="Broadbent J.R."/>
            <person name="Hutkins R."/>
            <person name="O'Sullivan D."/>
            <person name="Steele J."/>
            <person name="Unlu G."/>
            <person name="Saier M.H. Jr."/>
            <person name="Klaenhammer T."/>
            <person name="Richardson P."/>
            <person name="Kozyavkin S."/>
            <person name="Weimer B.C."/>
            <person name="Mills D.A."/>
        </authorList>
    </citation>
    <scope>NUCLEOTIDE SEQUENCE [LARGE SCALE GENOMIC DNA]</scope>
    <source>
        <strain>ATCC 334 / BCRC 17002 / CCUG 31169 / CIP 107868 / KCTC 3260 / NRRL B-441</strain>
    </source>
</reference>
<accession>Q03A83</accession>
<keyword id="KW-0961">Cell wall biogenesis/degradation</keyword>
<keyword id="KW-0548">Nucleotidyltransferase</keyword>
<keyword id="KW-1185">Reference proteome</keyword>
<keyword id="KW-0777">Teichoic acid biosynthesis</keyword>
<keyword id="KW-0808">Transferase</keyword>
<proteinExistence type="inferred from homology"/>
<evidence type="ECO:0000255" key="1">
    <source>
        <dbReference type="HAMAP-Rule" id="MF_02068"/>
    </source>
</evidence>
<gene>
    <name evidence="1" type="primary">tarI</name>
    <name type="ordered locus">LSEI_1098</name>
</gene>
<organism>
    <name type="scientific">Lacticaseibacillus paracasei (strain ATCC 334 / BCRC 17002 / CCUG 31169 / CIP 107868 / KCTC 3260 / NRRL B-441)</name>
    <name type="common">Lactobacillus paracasei</name>
    <dbReference type="NCBI Taxonomy" id="321967"/>
    <lineage>
        <taxon>Bacteria</taxon>
        <taxon>Bacillati</taxon>
        <taxon>Bacillota</taxon>
        <taxon>Bacilli</taxon>
        <taxon>Lactobacillales</taxon>
        <taxon>Lactobacillaceae</taxon>
        <taxon>Lacticaseibacillus</taxon>
    </lineage>
</organism>
<sequence length="234" mass="26536">MITAIVLAGGVGKRMGMEIPKQFVMVNEKPIIIYTLESFDRHPKIDQVVVVCKQGWADTMWGYIREFGIKKVKWVISGGSIVQKSINNAVQFLSDKCVEDDIVVIHDGIRPLVDEHVLSDVIVKCQEYGNAVTSLPYNEQIFIKETEKTTNKYIDRNTLRRVSTPQAYKYEVLHDAYDEAISQNIGMVDSAYTNTMMVDLGHTLYFAAGSDKNIKLTTTDDLALFKAYLREKEL</sequence>
<protein>
    <recommendedName>
        <fullName evidence="1">Ribitol-5-phosphate cytidylyltransferase</fullName>
        <ecNumber evidence="1">2.7.7.40</ecNumber>
    </recommendedName>
</protein>